<organism>
    <name type="scientific">Clostridium kluyveri (strain NBRC 12016)</name>
    <dbReference type="NCBI Taxonomy" id="583346"/>
    <lineage>
        <taxon>Bacteria</taxon>
        <taxon>Bacillati</taxon>
        <taxon>Bacillota</taxon>
        <taxon>Clostridia</taxon>
        <taxon>Eubacteriales</taxon>
        <taxon>Clostridiaceae</taxon>
        <taxon>Clostridium</taxon>
    </lineage>
</organism>
<accession>B9E6E0</accession>
<sequence length="410" mass="45043">MKSEILCVGTEILLGDIVNTNSQFISKELANLGIEVYHQSVVGDNPQRLLDELKLGFERSDIIITTGGLGPTQDDLTKETGAKFFNRELVLDKKSLKELKEHFNRMGKSYSDGNNIKQAYFPKGSTIFPNPYGTAPGCAIEDKGKILIVLPGPPRETKPMFKNYVIPLLKKYSNGIIKSKTLRIYGLGESAMAERVSPFIENSTNPTVAPYAKEEDIILRITARAAEEKEALSLIEPVEIELRKILGVNVYGEDDVKMEEVLGRLLIDKGYTLSCAESCTGGLIASKLINYPGISKAFKEGVVAYSNEAKIKRLGVKKDTLDKYGAVSPEVAKEMAIGIAETSNTDIGISTTGIAGPDGGTPEKPIGLVYLGLYNRGEIKVKELRHAGTRDMIRKRATMNALDWIRRQIL</sequence>
<comment type="similarity">
    <text evidence="1">Belongs to the CinA family.</text>
</comment>
<dbReference type="EMBL" id="AP009049">
    <property type="protein sequence ID" value="BAH08065.1"/>
    <property type="molecule type" value="Genomic_DNA"/>
</dbReference>
<dbReference type="RefSeq" id="WP_012103740.1">
    <property type="nucleotide sequence ID" value="NC_011837.1"/>
</dbReference>
<dbReference type="SMR" id="B9E6E0"/>
<dbReference type="KEGG" id="ckr:CKR_3014"/>
<dbReference type="HOGENOM" id="CLU_030805_9_3_9"/>
<dbReference type="Proteomes" id="UP000007969">
    <property type="component" value="Chromosome"/>
</dbReference>
<dbReference type="CDD" id="cd00885">
    <property type="entry name" value="cinA"/>
    <property type="match status" value="1"/>
</dbReference>
<dbReference type="Gene3D" id="3.30.70.2860">
    <property type="match status" value="1"/>
</dbReference>
<dbReference type="Gene3D" id="3.90.950.20">
    <property type="entry name" value="CinA-like"/>
    <property type="match status" value="1"/>
</dbReference>
<dbReference type="Gene3D" id="3.40.980.10">
    <property type="entry name" value="MoaB/Mog-like domain"/>
    <property type="match status" value="1"/>
</dbReference>
<dbReference type="HAMAP" id="MF_00226_B">
    <property type="entry name" value="CinA_B"/>
    <property type="match status" value="1"/>
</dbReference>
<dbReference type="InterPro" id="IPR050101">
    <property type="entry name" value="CinA"/>
</dbReference>
<dbReference type="InterPro" id="IPR036653">
    <property type="entry name" value="CinA-like_C"/>
</dbReference>
<dbReference type="InterPro" id="IPR008136">
    <property type="entry name" value="CinA_C"/>
</dbReference>
<dbReference type="InterPro" id="IPR041424">
    <property type="entry name" value="CinA_KH"/>
</dbReference>
<dbReference type="InterPro" id="IPR008135">
    <property type="entry name" value="Competence-induced_CinA"/>
</dbReference>
<dbReference type="InterPro" id="IPR036425">
    <property type="entry name" value="MoaB/Mog-like_dom_sf"/>
</dbReference>
<dbReference type="InterPro" id="IPR001453">
    <property type="entry name" value="MoaB/Mog_dom"/>
</dbReference>
<dbReference type="NCBIfam" id="TIGR00200">
    <property type="entry name" value="cinA_nterm"/>
    <property type="match status" value="1"/>
</dbReference>
<dbReference type="NCBIfam" id="TIGR00177">
    <property type="entry name" value="molyb_syn"/>
    <property type="match status" value="1"/>
</dbReference>
<dbReference type="NCBIfam" id="TIGR00199">
    <property type="entry name" value="PncC_domain"/>
    <property type="match status" value="1"/>
</dbReference>
<dbReference type="NCBIfam" id="NF001813">
    <property type="entry name" value="PRK00549.1"/>
    <property type="match status" value="1"/>
</dbReference>
<dbReference type="PANTHER" id="PTHR13939">
    <property type="entry name" value="NICOTINAMIDE-NUCLEOTIDE AMIDOHYDROLASE PNCC"/>
    <property type="match status" value="1"/>
</dbReference>
<dbReference type="PANTHER" id="PTHR13939:SF0">
    <property type="entry name" value="NMN AMIDOHYDROLASE-LIKE PROTEIN YFAY"/>
    <property type="match status" value="1"/>
</dbReference>
<dbReference type="Pfam" id="PF02464">
    <property type="entry name" value="CinA"/>
    <property type="match status" value="1"/>
</dbReference>
<dbReference type="Pfam" id="PF18146">
    <property type="entry name" value="CinA_KH"/>
    <property type="match status" value="1"/>
</dbReference>
<dbReference type="Pfam" id="PF00994">
    <property type="entry name" value="MoCF_biosynth"/>
    <property type="match status" value="1"/>
</dbReference>
<dbReference type="PIRSF" id="PIRSF006728">
    <property type="entry name" value="CinA"/>
    <property type="match status" value="1"/>
</dbReference>
<dbReference type="SMART" id="SM00852">
    <property type="entry name" value="MoCF_biosynth"/>
    <property type="match status" value="1"/>
</dbReference>
<dbReference type="SUPFAM" id="SSF142433">
    <property type="entry name" value="CinA-like"/>
    <property type="match status" value="1"/>
</dbReference>
<dbReference type="SUPFAM" id="SSF53218">
    <property type="entry name" value="Molybdenum cofactor biosynthesis proteins"/>
    <property type="match status" value="1"/>
</dbReference>
<name>CINA_CLOK1</name>
<evidence type="ECO:0000255" key="1">
    <source>
        <dbReference type="HAMAP-Rule" id="MF_00226"/>
    </source>
</evidence>
<reference key="1">
    <citation type="submission" date="2005-09" db="EMBL/GenBank/DDBJ databases">
        <title>Complete genome sequence of Clostridium kluyveri and comparative genomics of Clostridia species.</title>
        <authorList>
            <person name="Inui M."/>
            <person name="Nonaka H."/>
            <person name="Shinoda Y."/>
            <person name="Ikenaga Y."/>
            <person name="Abe M."/>
            <person name="Naito K."/>
            <person name="Vertes A.A."/>
            <person name="Yukawa H."/>
        </authorList>
    </citation>
    <scope>NUCLEOTIDE SEQUENCE [LARGE SCALE GENOMIC DNA]</scope>
    <source>
        <strain>NBRC 12016</strain>
    </source>
</reference>
<proteinExistence type="inferred from homology"/>
<protein>
    <recommendedName>
        <fullName evidence="1">Putative competence-damage inducible protein</fullName>
    </recommendedName>
</protein>
<gene>
    <name evidence="1" type="primary">cinA</name>
    <name type="ordered locus">CKR_3014</name>
</gene>
<feature type="chain" id="PRO_1000124980" description="Putative competence-damage inducible protein">
    <location>
        <begin position="1"/>
        <end position="410"/>
    </location>
</feature>